<accession>Q58015</accession>
<feature type="chain" id="PRO_0000087976" description="Type II methyltransferase M.MjaIII">
    <location>
        <begin position="1"/>
        <end position="289"/>
    </location>
</feature>
<feature type="binding site" evidence="1">
    <location>
        <position position="9"/>
    </location>
    <ligand>
        <name>S-adenosyl-L-methionine</name>
        <dbReference type="ChEBI" id="CHEBI:59789"/>
    </ligand>
</feature>
<feature type="binding site" evidence="1">
    <location>
        <position position="13"/>
    </location>
    <ligand>
        <name>S-adenosyl-L-methionine</name>
        <dbReference type="ChEBI" id="CHEBI:59789"/>
    </ligand>
</feature>
<feature type="binding site" evidence="1">
    <location>
        <position position="63"/>
    </location>
    <ligand>
        <name>S-adenosyl-L-methionine</name>
        <dbReference type="ChEBI" id="CHEBI:59789"/>
    </ligand>
</feature>
<feature type="binding site" evidence="1">
    <location>
        <position position="199"/>
    </location>
    <ligand>
        <name>S-adenosyl-L-methionine</name>
        <dbReference type="ChEBI" id="CHEBI:59789"/>
    </ligand>
</feature>
<sequence>MEVKPFLKWAGGKTQILSQIEENLPKELKEGNIKKYIEPFVGGGAVLFYLLQKYEFKKVIISDINEDLMLCYKVVKNDVDRLIEELSSLRDEFLSLDEEKRKEFYYKVRDDFNKNKNDCDEVKRVAQFIFLNKTCYNGLYRVNKKGEFNVPYGRYKNPKIFDEQNLKNVSKLLKNVKILCGDFEIVDEYVDAESFVYFDPPYKPLNKTSSFTSYTKYDFNDDDQIRLAKFYRKLDKRGAKLMLSNSYNVDFFGKLYEGFNIKKVVAKRMINCKGDKRKDGIYELLIMNY</sequence>
<name>MTM3_METJA</name>
<organism>
    <name type="scientific">Methanocaldococcus jannaschii (strain ATCC 43067 / DSM 2661 / JAL-1 / JCM 10045 / NBRC 100440)</name>
    <name type="common">Methanococcus jannaschii</name>
    <dbReference type="NCBI Taxonomy" id="243232"/>
    <lineage>
        <taxon>Archaea</taxon>
        <taxon>Methanobacteriati</taxon>
        <taxon>Methanobacteriota</taxon>
        <taxon>Methanomada group</taxon>
        <taxon>Methanococci</taxon>
        <taxon>Methanococcales</taxon>
        <taxon>Methanocaldococcaceae</taxon>
        <taxon>Methanocaldococcus</taxon>
    </lineage>
</organism>
<dbReference type="EC" id="2.1.1.72"/>
<dbReference type="EMBL" id="L77117">
    <property type="protein sequence ID" value="AAB98590.1"/>
    <property type="molecule type" value="Genomic_DNA"/>
</dbReference>
<dbReference type="PIR" id="F64374">
    <property type="entry name" value="F64374"/>
</dbReference>
<dbReference type="RefSeq" id="WP_010870102.1">
    <property type="nucleotide sequence ID" value="NC_000909.1"/>
</dbReference>
<dbReference type="SMR" id="Q58015"/>
<dbReference type="FunCoup" id="Q58015">
    <property type="interactions" value="5"/>
</dbReference>
<dbReference type="STRING" id="243232.MJ_0598"/>
<dbReference type="REBASE" id="3890">
    <property type="entry name" value="M.MjaIII"/>
</dbReference>
<dbReference type="PaxDb" id="243232-MJ_0598"/>
<dbReference type="EnsemblBacteria" id="AAB98590">
    <property type="protein sequence ID" value="AAB98590"/>
    <property type="gene ID" value="MJ_0598"/>
</dbReference>
<dbReference type="GeneID" id="1451463"/>
<dbReference type="KEGG" id="mja:MJ_0598"/>
<dbReference type="eggNOG" id="arCOG03416">
    <property type="taxonomic scope" value="Archaea"/>
</dbReference>
<dbReference type="HOGENOM" id="CLU_063430_0_0_2"/>
<dbReference type="InParanoid" id="Q58015"/>
<dbReference type="OrthoDB" id="372040at2157"/>
<dbReference type="PhylomeDB" id="Q58015"/>
<dbReference type="PRO" id="PR:Q58015"/>
<dbReference type="Proteomes" id="UP000000805">
    <property type="component" value="Chromosome"/>
</dbReference>
<dbReference type="GO" id="GO:1904047">
    <property type="term" value="F:S-adenosyl-L-methionine binding"/>
    <property type="evidence" value="ECO:0000318"/>
    <property type="project" value="GO_Central"/>
</dbReference>
<dbReference type="GO" id="GO:0043565">
    <property type="term" value="F:sequence-specific DNA binding"/>
    <property type="evidence" value="ECO:0000318"/>
    <property type="project" value="GO_Central"/>
</dbReference>
<dbReference type="GO" id="GO:0009007">
    <property type="term" value="F:site-specific DNA-methyltransferase (adenine-specific) activity"/>
    <property type="evidence" value="ECO:0000318"/>
    <property type="project" value="GO_Central"/>
</dbReference>
<dbReference type="GO" id="GO:0009307">
    <property type="term" value="P:DNA restriction-modification system"/>
    <property type="evidence" value="ECO:0007669"/>
    <property type="project" value="UniProtKB-KW"/>
</dbReference>
<dbReference type="GO" id="GO:0032259">
    <property type="term" value="P:methylation"/>
    <property type="evidence" value="ECO:0007669"/>
    <property type="project" value="UniProtKB-KW"/>
</dbReference>
<dbReference type="GO" id="GO:0006298">
    <property type="term" value="P:mismatch repair"/>
    <property type="evidence" value="ECO:0000318"/>
    <property type="project" value="GO_Central"/>
</dbReference>
<dbReference type="FunFam" id="1.10.1020.10:FF:000003">
    <property type="entry name" value="Site-specific DNA-methyltransferase (adenine-specific)"/>
    <property type="match status" value="1"/>
</dbReference>
<dbReference type="Gene3D" id="1.10.1020.10">
    <property type="entry name" value="Adenine-specific Methyltransferase, Domain 2"/>
    <property type="match status" value="1"/>
</dbReference>
<dbReference type="Gene3D" id="3.40.50.150">
    <property type="entry name" value="Vaccinia Virus protein VP39"/>
    <property type="match status" value="1"/>
</dbReference>
<dbReference type="InterPro" id="IPR023095">
    <property type="entry name" value="Ade_MeTrfase_dom_2"/>
</dbReference>
<dbReference type="InterPro" id="IPR002052">
    <property type="entry name" value="DNA_methylase_N6_adenine_CS"/>
</dbReference>
<dbReference type="InterPro" id="IPR012263">
    <property type="entry name" value="M_m6A_EcoRV"/>
</dbReference>
<dbReference type="InterPro" id="IPR012327">
    <property type="entry name" value="MeTrfase_D12"/>
</dbReference>
<dbReference type="InterPro" id="IPR029063">
    <property type="entry name" value="SAM-dependent_MTases_sf"/>
</dbReference>
<dbReference type="NCBIfam" id="TIGR00571">
    <property type="entry name" value="dam"/>
    <property type="match status" value="1"/>
</dbReference>
<dbReference type="PANTHER" id="PTHR30481">
    <property type="entry name" value="DNA ADENINE METHYLASE"/>
    <property type="match status" value="1"/>
</dbReference>
<dbReference type="PANTHER" id="PTHR30481:SF3">
    <property type="entry name" value="DNA ADENINE METHYLASE"/>
    <property type="match status" value="1"/>
</dbReference>
<dbReference type="Pfam" id="PF02086">
    <property type="entry name" value="MethyltransfD12"/>
    <property type="match status" value="1"/>
</dbReference>
<dbReference type="PIRSF" id="PIRSF000398">
    <property type="entry name" value="M_m6A_EcoRV"/>
    <property type="match status" value="1"/>
</dbReference>
<dbReference type="PRINTS" id="PR00505">
    <property type="entry name" value="D12N6MTFRASE"/>
</dbReference>
<dbReference type="SUPFAM" id="SSF53335">
    <property type="entry name" value="S-adenosyl-L-methionine-dependent methyltransferases"/>
    <property type="match status" value="1"/>
</dbReference>
<dbReference type="PROSITE" id="PS00092">
    <property type="entry name" value="N6_MTASE"/>
    <property type="match status" value="1"/>
</dbReference>
<gene>
    <name type="primary">mjaIIIM</name>
    <name type="ordered locus">MJ0598</name>
</gene>
<comment type="function">
    <text evidence="2">An alpha subtype methylase that recognizes the double-stranded sequence 5'-GATC-3', methylates A-2 on both strands, and protects the DNA from cleavage by the MjaIII endonuclease.</text>
</comment>
<comment type="catalytic activity">
    <reaction>
        <text>a 2'-deoxyadenosine in DNA + S-adenosyl-L-methionine = an N(6)-methyl-2'-deoxyadenosine in DNA + S-adenosyl-L-homocysteine + H(+)</text>
        <dbReference type="Rhea" id="RHEA:15197"/>
        <dbReference type="Rhea" id="RHEA-COMP:12418"/>
        <dbReference type="Rhea" id="RHEA-COMP:12419"/>
        <dbReference type="ChEBI" id="CHEBI:15378"/>
        <dbReference type="ChEBI" id="CHEBI:57856"/>
        <dbReference type="ChEBI" id="CHEBI:59789"/>
        <dbReference type="ChEBI" id="CHEBI:90615"/>
        <dbReference type="ChEBI" id="CHEBI:90616"/>
        <dbReference type="EC" id="2.1.1.72"/>
    </reaction>
</comment>
<comment type="similarity">
    <text evidence="3">Belongs to the N(4)/N(6)-methyltransferase family.</text>
</comment>
<evidence type="ECO:0000250" key="1"/>
<evidence type="ECO:0000303" key="2">
    <source>
    </source>
</evidence>
<evidence type="ECO:0000305" key="3"/>
<keyword id="KW-0238">DNA-binding</keyword>
<keyword id="KW-0489">Methyltransferase</keyword>
<keyword id="KW-1185">Reference proteome</keyword>
<keyword id="KW-0680">Restriction system</keyword>
<keyword id="KW-0949">S-adenosyl-L-methionine</keyword>
<keyword id="KW-0808">Transferase</keyword>
<reference key="1">
    <citation type="journal article" date="1996" name="Science">
        <title>Complete genome sequence of the methanogenic archaeon, Methanococcus jannaschii.</title>
        <authorList>
            <person name="Bult C.J."/>
            <person name="White O."/>
            <person name="Olsen G.J."/>
            <person name="Zhou L."/>
            <person name="Fleischmann R.D."/>
            <person name="Sutton G.G."/>
            <person name="Blake J.A."/>
            <person name="FitzGerald L.M."/>
            <person name="Clayton R.A."/>
            <person name="Gocayne J.D."/>
            <person name="Kerlavage A.R."/>
            <person name="Dougherty B.A."/>
            <person name="Tomb J.-F."/>
            <person name="Adams M.D."/>
            <person name="Reich C.I."/>
            <person name="Overbeek R."/>
            <person name="Kirkness E.F."/>
            <person name="Weinstock K.G."/>
            <person name="Merrick J.M."/>
            <person name="Glodek A."/>
            <person name="Scott J.L."/>
            <person name="Geoghagen N.S.M."/>
            <person name="Weidman J.F."/>
            <person name="Fuhrmann J.L."/>
            <person name="Nguyen D."/>
            <person name="Utterback T.R."/>
            <person name="Kelley J.M."/>
            <person name="Peterson J.D."/>
            <person name="Sadow P.W."/>
            <person name="Hanna M.C."/>
            <person name="Cotton M.D."/>
            <person name="Roberts K.M."/>
            <person name="Hurst M.A."/>
            <person name="Kaine B.P."/>
            <person name="Borodovsky M."/>
            <person name="Klenk H.-P."/>
            <person name="Fraser C.M."/>
            <person name="Smith H.O."/>
            <person name="Woese C.R."/>
            <person name="Venter J.C."/>
        </authorList>
    </citation>
    <scope>NUCLEOTIDE SEQUENCE [LARGE SCALE GENOMIC DNA]</scope>
    <source>
        <strain>ATCC 43067 / DSM 2661 / JAL-1 / JCM 10045 / NBRC 100440</strain>
    </source>
</reference>
<reference key="2">
    <citation type="journal article" date="2003" name="Nucleic Acids Res.">
        <title>A nomenclature for restriction enzymes, DNA methyltransferases, homing endonucleases and their genes.</title>
        <authorList>
            <person name="Roberts R.J."/>
            <person name="Belfort M."/>
            <person name="Bestor T."/>
            <person name="Bhagwat A.S."/>
            <person name="Bickle T.A."/>
            <person name="Bitinaite J."/>
            <person name="Blumenthal R.M."/>
            <person name="Degtyarev S.K."/>
            <person name="Dryden D.T."/>
            <person name="Dybvig K."/>
            <person name="Firman K."/>
            <person name="Gromova E.S."/>
            <person name="Gumport R.I."/>
            <person name="Halford S.E."/>
            <person name="Hattman S."/>
            <person name="Heitman J."/>
            <person name="Hornby D.P."/>
            <person name="Janulaitis A."/>
            <person name="Jeltsch A."/>
            <person name="Josephsen J."/>
            <person name="Kiss A."/>
            <person name="Klaenhammer T.R."/>
            <person name="Kobayashi I."/>
            <person name="Kong H."/>
            <person name="Krueger D.H."/>
            <person name="Lacks S."/>
            <person name="Marinus M.G."/>
            <person name="Miyahara M."/>
            <person name="Morgan R.D."/>
            <person name="Murray N.E."/>
            <person name="Nagaraja V."/>
            <person name="Piekarowicz A."/>
            <person name="Pingoud A."/>
            <person name="Raleigh E."/>
            <person name="Rao D.N."/>
            <person name="Reich N."/>
            <person name="Repin V.E."/>
            <person name="Selker E.U."/>
            <person name="Shaw P.C."/>
            <person name="Stein D.C."/>
            <person name="Stoddard B.L."/>
            <person name="Szybalski W."/>
            <person name="Trautner T.A."/>
            <person name="Van Etten J.L."/>
            <person name="Vitor J.M."/>
            <person name="Wilson G.G."/>
            <person name="Xu S.Y."/>
        </authorList>
    </citation>
    <scope>NOMENCLATURE</scope>
    <scope>SUBTYPE</scope>
</reference>
<proteinExistence type="inferred from homology"/>
<protein>
    <recommendedName>
        <fullName evidence="2">Type II methyltransferase M.MjaIII</fullName>
        <shortName evidence="2">M.MjaIII</shortName>
        <ecNumber>2.1.1.72</ecNumber>
    </recommendedName>
    <alternativeName>
        <fullName>Adenine-specific methyltransferase MjaIII</fullName>
    </alternativeName>
</protein>